<proteinExistence type="inferred from homology"/>
<protein>
    <recommendedName>
        <fullName evidence="1">Membrane protein insertase YidC</fullName>
    </recommendedName>
    <alternativeName>
        <fullName evidence="1">Foldase YidC</fullName>
    </alternativeName>
    <alternativeName>
        <fullName evidence="1">Membrane integrase YidC</fullName>
    </alternativeName>
    <alternativeName>
        <fullName evidence="1">Membrane protein YidC</fullName>
    </alternativeName>
</protein>
<feature type="chain" id="PRO_0000124718" description="Membrane protein insertase YidC">
    <location>
        <begin position="1"/>
        <end position="549"/>
    </location>
</feature>
<feature type="transmembrane region" description="Helical" evidence="1">
    <location>
        <begin position="9"/>
        <end position="29"/>
    </location>
</feature>
<feature type="transmembrane region" description="Helical" evidence="1">
    <location>
        <begin position="328"/>
        <end position="348"/>
    </location>
</feature>
<feature type="transmembrane region" description="Helical" evidence="1">
    <location>
        <begin position="351"/>
        <end position="371"/>
    </location>
</feature>
<feature type="transmembrane region" description="Helical" evidence="1">
    <location>
        <begin position="417"/>
        <end position="437"/>
    </location>
</feature>
<feature type="transmembrane region" description="Helical" evidence="1">
    <location>
        <begin position="452"/>
        <end position="472"/>
    </location>
</feature>
<feature type="transmembrane region" description="Helical" evidence="1">
    <location>
        <begin position="498"/>
        <end position="518"/>
    </location>
</feature>
<feature type="region of interest" description="Disordered" evidence="2">
    <location>
        <begin position="37"/>
        <end position="56"/>
    </location>
</feature>
<feature type="compositionally biased region" description="Low complexity" evidence="2">
    <location>
        <begin position="37"/>
        <end position="51"/>
    </location>
</feature>
<evidence type="ECO:0000255" key="1">
    <source>
        <dbReference type="HAMAP-Rule" id="MF_01810"/>
    </source>
</evidence>
<evidence type="ECO:0000256" key="2">
    <source>
        <dbReference type="SAM" id="MobiDB-lite"/>
    </source>
</evidence>
<accession>Q9ZJG8</accession>
<sequence length="549" mass="62702">MDKNNNNNLRLILAIALSFLFIALYSYFFQEPNKTTTETTKQETTNNHTATSPTASNTITQDFSVTQTIPQESLLSTISFEHAKIEIDSLGRIKQVYLKDKKYLTPKEKGFLEHVSHLFSSKENSQPSLKELPLLAADKLKPLEVRFLDPTLNNKAFNTPYSASKTTLGPNEQLVLTQDLGTLSIIKTLTFYDDLHYDLKIAFKSPNNLIPSYVITNGYRPVADLDSYTFSGVLLENTDKKIEKIEDKDAKEIKRFSNTLFLSSVDRYFTTLLFTKDPQGFEALIDSEIGTKNPLGFISLKNEANLHGYIGPKDYRSLKAISPMLTDVIEYGLITFFAKGVFVLLDYLYQFVGNWGWAIILLTIIVRIILYPLSYKGMVSMQKLKELAPKMKELQEKYKGEPQKLQAHMMQLYKKHGANPLGGCLPLILQIPVFFAIYRVLYNAVELKSSEWVLWIHDLSIMDPYFILPLLMGASMYWHQSVTPNTMTDPMQAKIFKLLPLLFTIFLITFPAGLVLYWTTHNILSVLQQLIINKVLENKKRAHAQNIKE</sequence>
<name>YIDC_HELPJ</name>
<reference key="1">
    <citation type="journal article" date="1999" name="Nature">
        <title>Genomic sequence comparison of two unrelated isolates of the human gastric pathogen Helicobacter pylori.</title>
        <authorList>
            <person name="Alm R.A."/>
            <person name="Ling L.-S.L."/>
            <person name="Moir D.T."/>
            <person name="King B.L."/>
            <person name="Brown E.D."/>
            <person name="Doig P.C."/>
            <person name="Smith D.R."/>
            <person name="Noonan B."/>
            <person name="Guild B.C."/>
            <person name="deJonge B.L."/>
            <person name="Carmel G."/>
            <person name="Tummino P.J."/>
            <person name="Caruso A."/>
            <person name="Uria-Nickelsen M."/>
            <person name="Mills D.M."/>
            <person name="Ives C."/>
            <person name="Gibson R."/>
            <person name="Merberg D."/>
            <person name="Mills S.D."/>
            <person name="Jiang Q."/>
            <person name="Taylor D.E."/>
            <person name="Vovis G.F."/>
            <person name="Trust T.J."/>
        </authorList>
    </citation>
    <scope>NUCLEOTIDE SEQUENCE [LARGE SCALE GENOMIC DNA]</scope>
    <source>
        <strain>J99 / ATCC 700824</strain>
    </source>
</reference>
<gene>
    <name evidence="1" type="primary">yidC</name>
    <name type="ordered locus">jhp_1343</name>
</gene>
<dbReference type="EMBL" id="AE001439">
    <property type="protein sequence ID" value="AAD06920.1"/>
    <property type="molecule type" value="Genomic_DNA"/>
</dbReference>
<dbReference type="PIR" id="E71818">
    <property type="entry name" value="E71818"/>
</dbReference>
<dbReference type="RefSeq" id="WP_000360157.1">
    <property type="nucleotide sequence ID" value="NC_000921.1"/>
</dbReference>
<dbReference type="SMR" id="Q9ZJG8"/>
<dbReference type="KEGG" id="hpj:jhp_1343"/>
<dbReference type="eggNOG" id="COG0706">
    <property type="taxonomic scope" value="Bacteria"/>
</dbReference>
<dbReference type="Proteomes" id="UP000000804">
    <property type="component" value="Chromosome"/>
</dbReference>
<dbReference type="GO" id="GO:0005886">
    <property type="term" value="C:plasma membrane"/>
    <property type="evidence" value="ECO:0007669"/>
    <property type="project" value="UniProtKB-SubCell"/>
</dbReference>
<dbReference type="GO" id="GO:0032977">
    <property type="term" value="F:membrane insertase activity"/>
    <property type="evidence" value="ECO:0007669"/>
    <property type="project" value="InterPro"/>
</dbReference>
<dbReference type="GO" id="GO:0051205">
    <property type="term" value="P:protein insertion into membrane"/>
    <property type="evidence" value="ECO:0007669"/>
    <property type="project" value="TreeGrafter"/>
</dbReference>
<dbReference type="GO" id="GO:0015031">
    <property type="term" value="P:protein transport"/>
    <property type="evidence" value="ECO:0007669"/>
    <property type="project" value="UniProtKB-KW"/>
</dbReference>
<dbReference type="CDD" id="cd20070">
    <property type="entry name" value="5TM_YidC_Alb3"/>
    <property type="match status" value="1"/>
</dbReference>
<dbReference type="CDD" id="cd19960">
    <property type="entry name" value="YidC_peri"/>
    <property type="match status" value="1"/>
</dbReference>
<dbReference type="FunFam" id="2.70.98.90:FF:000010">
    <property type="entry name" value="Membrane protein insertase YidC"/>
    <property type="match status" value="1"/>
</dbReference>
<dbReference type="Gene3D" id="2.70.98.90">
    <property type="match status" value="1"/>
</dbReference>
<dbReference type="HAMAP" id="MF_01810">
    <property type="entry name" value="YidC_type1"/>
    <property type="match status" value="1"/>
</dbReference>
<dbReference type="InterPro" id="IPR019998">
    <property type="entry name" value="Membr_insert_YidC"/>
</dbReference>
<dbReference type="InterPro" id="IPR028053">
    <property type="entry name" value="Membr_insert_YidC_N"/>
</dbReference>
<dbReference type="InterPro" id="IPR001708">
    <property type="entry name" value="YidC/ALB3/OXA1/COX18"/>
</dbReference>
<dbReference type="InterPro" id="IPR028055">
    <property type="entry name" value="YidC/Oxa/ALB_C"/>
</dbReference>
<dbReference type="InterPro" id="IPR047196">
    <property type="entry name" value="YidC_ALB_C"/>
</dbReference>
<dbReference type="InterPro" id="IPR038221">
    <property type="entry name" value="YidC_periplasmic_sf"/>
</dbReference>
<dbReference type="NCBIfam" id="NF002354">
    <property type="entry name" value="PRK01318.2-1"/>
    <property type="match status" value="1"/>
</dbReference>
<dbReference type="NCBIfam" id="NF002357">
    <property type="entry name" value="PRK01318.2-4"/>
    <property type="match status" value="1"/>
</dbReference>
<dbReference type="NCBIfam" id="TIGR03593">
    <property type="entry name" value="yidC_nterm"/>
    <property type="match status" value="1"/>
</dbReference>
<dbReference type="NCBIfam" id="TIGR03592">
    <property type="entry name" value="yidC_oxa1_cterm"/>
    <property type="match status" value="1"/>
</dbReference>
<dbReference type="PANTHER" id="PTHR12428:SF65">
    <property type="entry name" value="CYTOCHROME C OXIDASE ASSEMBLY PROTEIN COX18, MITOCHONDRIAL"/>
    <property type="match status" value="1"/>
</dbReference>
<dbReference type="PANTHER" id="PTHR12428">
    <property type="entry name" value="OXA1"/>
    <property type="match status" value="1"/>
</dbReference>
<dbReference type="Pfam" id="PF02096">
    <property type="entry name" value="60KD_IMP"/>
    <property type="match status" value="1"/>
</dbReference>
<dbReference type="Pfam" id="PF14849">
    <property type="entry name" value="YidC_periplas"/>
    <property type="match status" value="1"/>
</dbReference>
<dbReference type="PRINTS" id="PR00701">
    <property type="entry name" value="60KDINNERMP"/>
</dbReference>
<dbReference type="PRINTS" id="PR01900">
    <property type="entry name" value="YIDCPROTEIN"/>
</dbReference>
<keyword id="KW-0997">Cell inner membrane</keyword>
<keyword id="KW-1003">Cell membrane</keyword>
<keyword id="KW-0143">Chaperone</keyword>
<keyword id="KW-0472">Membrane</keyword>
<keyword id="KW-0653">Protein transport</keyword>
<keyword id="KW-0812">Transmembrane</keyword>
<keyword id="KW-1133">Transmembrane helix</keyword>
<keyword id="KW-0813">Transport</keyword>
<organism>
    <name type="scientific">Helicobacter pylori (strain J99 / ATCC 700824)</name>
    <name type="common">Campylobacter pylori J99</name>
    <dbReference type="NCBI Taxonomy" id="85963"/>
    <lineage>
        <taxon>Bacteria</taxon>
        <taxon>Pseudomonadati</taxon>
        <taxon>Campylobacterota</taxon>
        <taxon>Epsilonproteobacteria</taxon>
        <taxon>Campylobacterales</taxon>
        <taxon>Helicobacteraceae</taxon>
        <taxon>Helicobacter</taxon>
    </lineage>
</organism>
<comment type="function">
    <text evidence="1">Required for the insertion and/or proper folding and/or complex formation of integral membrane proteins into the membrane. Involved in integration of membrane proteins that insert both dependently and independently of the Sec translocase complex, as well as at least some lipoproteins. Aids folding of multispanning membrane proteins.</text>
</comment>
<comment type="subunit">
    <text evidence="1">Interacts with the Sec translocase complex via SecD. Specifically interacts with transmembrane segments of nascent integral membrane proteins during membrane integration.</text>
</comment>
<comment type="subcellular location">
    <subcellularLocation>
        <location evidence="1">Cell inner membrane</location>
        <topology evidence="1">Multi-pass membrane protein</topology>
    </subcellularLocation>
</comment>
<comment type="similarity">
    <text evidence="1">Belongs to the OXA1/ALB3/YidC family. Type 1 subfamily.</text>
</comment>